<comment type="function">
    <text evidence="2">GTP hydrolase that promotes the GTP-dependent binding of aminoacyl-tRNA to the A-site of ribosomes during protein biosynthesis.</text>
</comment>
<comment type="catalytic activity">
    <reaction evidence="2">
        <text>GTP + H2O = GDP + phosphate + H(+)</text>
        <dbReference type="Rhea" id="RHEA:19669"/>
        <dbReference type="ChEBI" id="CHEBI:15377"/>
        <dbReference type="ChEBI" id="CHEBI:15378"/>
        <dbReference type="ChEBI" id="CHEBI:37565"/>
        <dbReference type="ChEBI" id="CHEBI:43474"/>
        <dbReference type="ChEBI" id="CHEBI:58189"/>
        <dbReference type="EC" id="3.6.5.3"/>
    </reaction>
    <physiologicalReaction direction="left-to-right" evidence="2">
        <dbReference type="Rhea" id="RHEA:19670"/>
    </physiologicalReaction>
</comment>
<comment type="subunit">
    <text evidence="2">Monomer.</text>
</comment>
<comment type="subcellular location">
    <subcellularLocation>
        <location evidence="2">Cytoplasm</location>
    </subcellularLocation>
</comment>
<comment type="similarity">
    <text evidence="2">Belongs to the TRAFAC class translation factor GTPase superfamily. Classic translation factor GTPase family. EF-Tu/EF-1A subfamily.</text>
</comment>
<evidence type="ECO:0000250" key="1"/>
<evidence type="ECO:0000255" key="2">
    <source>
        <dbReference type="HAMAP-Rule" id="MF_00118"/>
    </source>
</evidence>
<name>EFTU_LACPL</name>
<proteinExistence type="inferred from homology"/>
<feature type="chain" id="PRO_0000091337" description="Elongation factor Tu">
    <location>
        <begin position="1"/>
        <end position="395"/>
    </location>
</feature>
<feature type="domain" description="tr-type G">
    <location>
        <begin position="10"/>
        <end position="204"/>
    </location>
</feature>
<feature type="region of interest" description="G1" evidence="1">
    <location>
        <begin position="19"/>
        <end position="26"/>
    </location>
</feature>
<feature type="region of interest" description="G2" evidence="1">
    <location>
        <begin position="60"/>
        <end position="64"/>
    </location>
</feature>
<feature type="region of interest" description="G3" evidence="1">
    <location>
        <begin position="81"/>
        <end position="84"/>
    </location>
</feature>
<feature type="region of interest" description="G4" evidence="1">
    <location>
        <begin position="136"/>
        <end position="139"/>
    </location>
</feature>
<feature type="region of interest" description="G5" evidence="1">
    <location>
        <begin position="174"/>
        <end position="176"/>
    </location>
</feature>
<feature type="binding site" evidence="2">
    <location>
        <begin position="19"/>
        <end position="26"/>
    </location>
    <ligand>
        <name>GTP</name>
        <dbReference type="ChEBI" id="CHEBI:37565"/>
    </ligand>
</feature>
<feature type="binding site" evidence="2">
    <location>
        <position position="26"/>
    </location>
    <ligand>
        <name>Mg(2+)</name>
        <dbReference type="ChEBI" id="CHEBI:18420"/>
    </ligand>
</feature>
<feature type="binding site" evidence="2">
    <location>
        <begin position="81"/>
        <end position="85"/>
    </location>
    <ligand>
        <name>GTP</name>
        <dbReference type="ChEBI" id="CHEBI:37565"/>
    </ligand>
</feature>
<feature type="binding site" evidence="2">
    <location>
        <begin position="136"/>
        <end position="139"/>
    </location>
    <ligand>
        <name>GTP</name>
        <dbReference type="ChEBI" id="CHEBI:37565"/>
    </ligand>
</feature>
<keyword id="KW-0963">Cytoplasm</keyword>
<keyword id="KW-0251">Elongation factor</keyword>
<keyword id="KW-0342">GTP-binding</keyword>
<keyword id="KW-0378">Hydrolase</keyword>
<keyword id="KW-0460">Magnesium</keyword>
<keyword id="KW-0479">Metal-binding</keyword>
<keyword id="KW-0547">Nucleotide-binding</keyword>
<keyword id="KW-0648">Protein biosynthesis</keyword>
<keyword id="KW-1185">Reference proteome</keyword>
<protein>
    <recommendedName>
        <fullName evidence="2">Elongation factor Tu</fullName>
        <shortName evidence="2">EF-Tu</shortName>
        <ecNumber evidence="2">3.6.5.3</ecNumber>
    </recommendedName>
</protein>
<accession>Q88VE0</accession>
<accession>F9UQ65</accession>
<sequence length="395" mass="43377">MAKEHYERTKPHVNIGTIGHVDHGKTTLTAAITKVLASKGLAKEQDFASIDAAPEERERGITINTAHVEYETEKRHYAHIDAPGHADYVKNMITGAAQMDGAILVVAATDGPMPQTREHILLARQVGVDYIVVFLNKTDLVDDDELVDLVEMEVRELLSEYDFPGDDIPVIRGSALKALEGDPEQEKVIMHLMDVVDEYIPTPVRDTEKPFLMPVEDVFSITGRGTVASGRIDRGTVKVGDEVEIVGLHEDVLKSTVTGLEMFRKTLDLGEAGDNVGALLRGVNREQVVRGQVLAKPGSIQTHKKFKGEVYILSKEEGGRHTPFFSNYRPQFYFHTTDITGVIELPDGVEMVMPGDNVTFTVELIQPAAIEKGTKFTVREGGHTVGAGVVSEIDD</sequence>
<reference key="1">
    <citation type="journal article" date="2003" name="Proc. Natl. Acad. Sci. U.S.A.">
        <title>Complete genome sequence of Lactobacillus plantarum WCFS1.</title>
        <authorList>
            <person name="Kleerebezem M."/>
            <person name="Boekhorst J."/>
            <person name="van Kranenburg R."/>
            <person name="Molenaar D."/>
            <person name="Kuipers O.P."/>
            <person name="Leer R."/>
            <person name="Tarchini R."/>
            <person name="Peters S.A."/>
            <person name="Sandbrink H.M."/>
            <person name="Fiers M.W.E.J."/>
            <person name="Stiekema W."/>
            <person name="Klein Lankhorst R.M."/>
            <person name="Bron P.A."/>
            <person name="Hoffer S.M."/>
            <person name="Nierop Groot M.N."/>
            <person name="Kerkhoven R."/>
            <person name="De Vries M."/>
            <person name="Ursing B."/>
            <person name="De Vos W.M."/>
            <person name="Siezen R.J."/>
        </authorList>
    </citation>
    <scope>NUCLEOTIDE SEQUENCE [LARGE SCALE GENOMIC DNA]</scope>
    <source>
        <strain>ATCC BAA-793 / NCIMB 8826 / WCFS1</strain>
    </source>
</reference>
<reference key="2">
    <citation type="journal article" date="2012" name="J. Bacteriol.">
        <title>Complete resequencing and reannotation of the Lactobacillus plantarum WCFS1 genome.</title>
        <authorList>
            <person name="Siezen R.J."/>
            <person name="Francke C."/>
            <person name="Renckens B."/>
            <person name="Boekhorst J."/>
            <person name="Wels M."/>
            <person name="Kleerebezem M."/>
            <person name="van Hijum S.A."/>
        </authorList>
    </citation>
    <scope>NUCLEOTIDE SEQUENCE [LARGE SCALE GENOMIC DNA]</scope>
    <scope>GENOME REANNOTATION</scope>
    <source>
        <strain>ATCC BAA-793 / NCIMB 8826 / WCFS1</strain>
    </source>
</reference>
<gene>
    <name evidence="2" type="primary">tuf</name>
    <name type="ordered locus">lp_2119</name>
</gene>
<dbReference type="EC" id="3.6.5.3" evidence="2"/>
<dbReference type="EMBL" id="AL935263">
    <property type="protein sequence ID" value="CCC79354.1"/>
    <property type="molecule type" value="Genomic_DNA"/>
</dbReference>
<dbReference type="RefSeq" id="WP_003640798.1">
    <property type="nucleotide sequence ID" value="NC_004567.2"/>
</dbReference>
<dbReference type="RefSeq" id="YP_004889868.1">
    <property type="nucleotide sequence ID" value="NC_004567.2"/>
</dbReference>
<dbReference type="SMR" id="Q88VE0"/>
<dbReference type="STRING" id="220668.lp_2119"/>
<dbReference type="EnsemblBacteria" id="CCC79354">
    <property type="protein sequence ID" value="CCC79354"/>
    <property type="gene ID" value="lp_2119"/>
</dbReference>
<dbReference type="GeneID" id="89669395"/>
<dbReference type="KEGG" id="lpl:lp_2119"/>
<dbReference type="PATRIC" id="fig|220668.9.peg.1795"/>
<dbReference type="eggNOG" id="COG0050">
    <property type="taxonomic scope" value="Bacteria"/>
</dbReference>
<dbReference type="HOGENOM" id="CLU_007265_0_1_9"/>
<dbReference type="OrthoDB" id="9804504at2"/>
<dbReference type="PhylomeDB" id="Q88VE0"/>
<dbReference type="Proteomes" id="UP000000432">
    <property type="component" value="Chromosome"/>
</dbReference>
<dbReference type="GO" id="GO:0005829">
    <property type="term" value="C:cytosol"/>
    <property type="evidence" value="ECO:0007669"/>
    <property type="project" value="TreeGrafter"/>
</dbReference>
<dbReference type="GO" id="GO:0005525">
    <property type="term" value="F:GTP binding"/>
    <property type="evidence" value="ECO:0007669"/>
    <property type="project" value="UniProtKB-UniRule"/>
</dbReference>
<dbReference type="GO" id="GO:0003924">
    <property type="term" value="F:GTPase activity"/>
    <property type="evidence" value="ECO:0007669"/>
    <property type="project" value="InterPro"/>
</dbReference>
<dbReference type="GO" id="GO:0003746">
    <property type="term" value="F:translation elongation factor activity"/>
    <property type="evidence" value="ECO:0007669"/>
    <property type="project" value="UniProtKB-UniRule"/>
</dbReference>
<dbReference type="CDD" id="cd01884">
    <property type="entry name" value="EF_Tu"/>
    <property type="match status" value="1"/>
</dbReference>
<dbReference type="CDD" id="cd03697">
    <property type="entry name" value="EFTU_II"/>
    <property type="match status" value="1"/>
</dbReference>
<dbReference type="CDD" id="cd03707">
    <property type="entry name" value="EFTU_III"/>
    <property type="match status" value="1"/>
</dbReference>
<dbReference type="FunFam" id="2.40.30.10:FF:000001">
    <property type="entry name" value="Elongation factor Tu"/>
    <property type="match status" value="1"/>
</dbReference>
<dbReference type="FunFam" id="3.40.50.300:FF:000003">
    <property type="entry name" value="Elongation factor Tu"/>
    <property type="match status" value="1"/>
</dbReference>
<dbReference type="Gene3D" id="3.40.50.300">
    <property type="entry name" value="P-loop containing nucleotide triphosphate hydrolases"/>
    <property type="match status" value="1"/>
</dbReference>
<dbReference type="Gene3D" id="2.40.30.10">
    <property type="entry name" value="Translation factors"/>
    <property type="match status" value="2"/>
</dbReference>
<dbReference type="HAMAP" id="MF_00118_B">
    <property type="entry name" value="EF_Tu_B"/>
    <property type="match status" value="1"/>
</dbReference>
<dbReference type="InterPro" id="IPR041709">
    <property type="entry name" value="EF-Tu_GTP-bd"/>
</dbReference>
<dbReference type="InterPro" id="IPR050055">
    <property type="entry name" value="EF-Tu_GTPase"/>
</dbReference>
<dbReference type="InterPro" id="IPR004161">
    <property type="entry name" value="EFTu-like_2"/>
</dbReference>
<dbReference type="InterPro" id="IPR033720">
    <property type="entry name" value="EFTU_2"/>
</dbReference>
<dbReference type="InterPro" id="IPR031157">
    <property type="entry name" value="G_TR_CS"/>
</dbReference>
<dbReference type="InterPro" id="IPR027417">
    <property type="entry name" value="P-loop_NTPase"/>
</dbReference>
<dbReference type="InterPro" id="IPR005225">
    <property type="entry name" value="Small_GTP-bd"/>
</dbReference>
<dbReference type="InterPro" id="IPR000795">
    <property type="entry name" value="T_Tr_GTP-bd_dom"/>
</dbReference>
<dbReference type="InterPro" id="IPR009000">
    <property type="entry name" value="Transl_B-barrel_sf"/>
</dbReference>
<dbReference type="InterPro" id="IPR009001">
    <property type="entry name" value="Transl_elong_EF1A/Init_IF2_C"/>
</dbReference>
<dbReference type="InterPro" id="IPR004541">
    <property type="entry name" value="Transl_elong_EFTu/EF1A_bac/org"/>
</dbReference>
<dbReference type="InterPro" id="IPR004160">
    <property type="entry name" value="Transl_elong_EFTu/EF1A_C"/>
</dbReference>
<dbReference type="NCBIfam" id="TIGR00485">
    <property type="entry name" value="EF-Tu"/>
    <property type="match status" value="1"/>
</dbReference>
<dbReference type="NCBIfam" id="NF000766">
    <property type="entry name" value="PRK00049.1"/>
    <property type="match status" value="1"/>
</dbReference>
<dbReference type="NCBIfam" id="NF009372">
    <property type="entry name" value="PRK12735.1"/>
    <property type="match status" value="1"/>
</dbReference>
<dbReference type="NCBIfam" id="NF009373">
    <property type="entry name" value="PRK12736.1"/>
    <property type="match status" value="1"/>
</dbReference>
<dbReference type="NCBIfam" id="TIGR00231">
    <property type="entry name" value="small_GTP"/>
    <property type="match status" value="1"/>
</dbReference>
<dbReference type="PANTHER" id="PTHR43721:SF22">
    <property type="entry name" value="ELONGATION FACTOR TU, MITOCHONDRIAL"/>
    <property type="match status" value="1"/>
</dbReference>
<dbReference type="PANTHER" id="PTHR43721">
    <property type="entry name" value="ELONGATION FACTOR TU-RELATED"/>
    <property type="match status" value="1"/>
</dbReference>
<dbReference type="Pfam" id="PF00009">
    <property type="entry name" value="GTP_EFTU"/>
    <property type="match status" value="1"/>
</dbReference>
<dbReference type="Pfam" id="PF03144">
    <property type="entry name" value="GTP_EFTU_D2"/>
    <property type="match status" value="1"/>
</dbReference>
<dbReference type="Pfam" id="PF03143">
    <property type="entry name" value="GTP_EFTU_D3"/>
    <property type="match status" value="1"/>
</dbReference>
<dbReference type="PRINTS" id="PR00315">
    <property type="entry name" value="ELONGATNFCT"/>
</dbReference>
<dbReference type="SUPFAM" id="SSF50465">
    <property type="entry name" value="EF-Tu/eEF-1alpha/eIF2-gamma C-terminal domain"/>
    <property type="match status" value="1"/>
</dbReference>
<dbReference type="SUPFAM" id="SSF52540">
    <property type="entry name" value="P-loop containing nucleoside triphosphate hydrolases"/>
    <property type="match status" value="1"/>
</dbReference>
<dbReference type="SUPFAM" id="SSF50447">
    <property type="entry name" value="Translation proteins"/>
    <property type="match status" value="1"/>
</dbReference>
<dbReference type="PROSITE" id="PS00301">
    <property type="entry name" value="G_TR_1"/>
    <property type="match status" value="1"/>
</dbReference>
<dbReference type="PROSITE" id="PS51722">
    <property type="entry name" value="G_TR_2"/>
    <property type="match status" value="1"/>
</dbReference>
<organism>
    <name type="scientific">Lactiplantibacillus plantarum (strain ATCC BAA-793 / NCIMB 8826 / WCFS1)</name>
    <name type="common">Lactobacillus plantarum</name>
    <dbReference type="NCBI Taxonomy" id="220668"/>
    <lineage>
        <taxon>Bacteria</taxon>
        <taxon>Bacillati</taxon>
        <taxon>Bacillota</taxon>
        <taxon>Bacilli</taxon>
        <taxon>Lactobacillales</taxon>
        <taxon>Lactobacillaceae</taxon>
        <taxon>Lactiplantibacillus</taxon>
    </lineage>
</organism>